<dbReference type="EC" id="3.5.1.5" evidence="1"/>
<dbReference type="EMBL" id="CP001032">
    <property type="protein sequence ID" value="ACB77496.1"/>
    <property type="molecule type" value="Genomic_DNA"/>
</dbReference>
<dbReference type="RefSeq" id="WP_012377024.1">
    <property type="nucleotide sequence ID" value="NC_010571.1"/>
</dbReference>
<dbReference type="SMR" id="B1ZP07"/>
<dbReference type="STRING" id="452637.Oter_4223"/>
<dbReference type="KEGG" id="ote:Oter_4223"/>
<dbReference type="eggNOG" id="COG0832">
    <property type="taxonomic scope" value="Bacteria"/>
</dbReference>
<dbReference type="HOGENOM" id="CLU_129707_1_1_0"/>
<dbReference type="OrthoDB" id="9797217at2"/>
<dbReference type="UniPathway" id="UPA00258">
    <property type="reaction ID" value="UER00370"/>
</dbReference>
<dbReference type="Proteomes" id="UP000007013">
    <property type="component" value="Chromosome"/>
</dbReference>
<dbReference type="GO" id="GO:0035550">
    <property type="term" value="C:urease complex"/>
    <property type="evidence" value="ECO:0007669"/>
    <property type="project" value="InterPro"/>
</dbReference>
<dbReference type="GO" id="GO:0009039">
    <property type="term" value="F:urease activity"/>
    <property type="evidence" value="ECO:0007669"/>
    <property type="project" value="UniProtKB-UniRule"/>
</dbReference>
<dbReference type="GO" id="GO:0043419">
    <property type="term" value="P:urea catabolic process"/>
    <property type="evidence" value="ECO:0007669"/>
    <property type="project" value="UniProtKB-UniRule"/>
</dbReference>
<dbReference type="CDD" id="cd00407">
    <property type="entry name" value="Urease_beta"/>
    <property type="match status" value="1"/>
</dbReference>
<dbReference type="Gene3D" id="2.10.150.10">
    <property type="entry name" value="Urease, beta subunit"/>
    <property type="match status" value="1"/>
</dbReference>
<dbReference type="HAMAP" id="MF_01954">
    <property type="entry name" value="Urease_beta"/>
    <property type="match status" value="1"/>
</dbReference>
<dbReference type="InterPro" id="IPR002019">
    <property type="entry name" value="Urease_beta-like"/>
</dbReference>
<dbReference type="InterPro" id="IPR036461">
    <property type="entry name" value="Urease_betasu_sf"/>
</dbReference>
<dbReference type="InterPro" id="IPR050069">
    <property type="entry name" value="Urease_subunit"/>
</dbReference>
<dbReference type="NCBIfam" id="NF009682">
    <property type="entry name" value="PRK13203.1"/>
    <property type="match status" value="1"/>
</dbReference>
<dbReference type="NCBIfam" id="TIGR00192">
    <property type="entry name" value="urease_beta"/>
    <property type="match status" value="1"/>
</dbReference>
<dbReference type="PANTHER" id="PTHR33569">
    <property type="entry name" value="UREASE"/>
    <property type="match status" value="1"/>
</dbReference>
<dbReference type="PANTHER" id="PTHR33569:SF1">
    <property type="entry name" value="UREASE"/>
    <property type="match status" value="1"/>
</dbReference>
<dbReference type="Pfam" id="PF00699">
    <property type="entry name" value="Urease_beta"/>
    <property type="match status" value="1"/>
</dbReference>
<dbReference type="SUPFAM" id="SSF51278">
    <property type="entry name" value="Urease, beta-subunit"/>
    <property type="match status" value="1"/>
</dbReference>
<feature type="chain" id="PRO_1000188933" description="Urease subunit beta">
    <location>
        <begin position="1"/>
        <end position="102"/>
    </location>
</feature>
<protein>
    <recommendedName>
        <fullName evidence="1">Urease subunit beta</fullName>
        <ecNumber evidence="1">3.5.1.5</ecNumber>
    </recommendedName>
    <alternativeName>
        <fullName evidence="1">Urea amidohydrolase subunit beta</fullName>
    </alternativeName>
</protein>
<gene>
    <name evidence="1" type="primary">ureB</name>
    <name type="ordered locus">Oter_4223</name>
</gene>
<name>URE2_OPITP</name>
<organism>
    <name type="scientific">Opitutus terrae (strain DSM 11246 / JCM 15787 / PB90-1)</name>
    <dbReference type="NCBI Taxonomy" id="452637"/>
    <lineage>
        <taxon>Bacteria</taxon>
        <taxon>Pseudomonadati</taxon>
        <taxon>Verrucomicrobiota</taxon>
        <taxon>Opitutia</taxon>
        <taxon>Opitutales</taxon>
        <taxon>Opitutaceae</taxon>
        <taxon>Opitutus</taxon>
    </lineage>
</organism>
<sequence>MIPGEIIPAAGLPLDANTGLETKVLTVANTGDRPIQVGSHYHFFETNEALEFDRDATRGFRLNIPAGTAVRFEAGDTKRVELVALAGAREVYGLNARVNGKL</sequence>
<keyword id="KW-0963">Cytoplasm</keyword>
<keyword id="KW-0378">Hydrolase</keyword>
<keyword id="KW-1185">Reference proteome</keyword>
<accession>B1ZP07</accession>
<comment type="catalytic activity">
    <reaction evidence="1">
        <text>urea + 2 H2O + H(+) = hydrogencarbonate + 2 NH4(+)</text>
        <dbReference type="Rhea" id="RHEA:20557"/>
        <dbReference type="ChEBI" id="CHEBI:15377"/>
        <dbReference type="ChEBI" id="CHEBI:15378"/>
        <dbReference type="ChEBI" id="CHEBI:16199"/>
        <dbReference type="ChEBI" id="CHEBI:17544"/>
        <dbReference type="ChEBI" id="CHEBI:28938"/>
        <dbReference type="EC" id="3.5.1.5"/>
    </reaction>
</comment>
<comment type="pathway">
    <text evidence="1">Nitrogen metabolism; urea degradation; CO(2) and NH(3) from urea (urease route): step 1/1.</text>
</comment>
<comment type="subunit">
    <text evidence="1">Heterotrimer of UreA (gamma), UreB (beta) and UreC (alpha) subunits. Three heterotrimers associate to form the active enzyme.</text>
</comment>
<comment type="subcellular location">
    <subcellularLocation>
        <location evidence="1">Cytoplasm</location>
    </subcellularLocation>
</comment>
<comment type="similarity">
    <text evidence="1">Belongs to the urease beta subunit family.</text>
</comment>
<reference key="1">
    <citation type="journal article" date="2011" name="J. Bacteriol.">
        <title>Genome sequence of the verrucomicrobium Opitutus terrae PB90-1, an abundant inhabitant of rice paddy soil ecosystems.</title>
        <authorList>
            <person name="van Passel M.W."/>
            <person name="Kant R."/>
            <person name="Palva A."/>
            <person name="Copeland A."/>
            <person name="Lucas S."/>
            <person name="Lapidus A."/>
            <person name="Glavina del Rio T."/>
            <person name="Pitluck S."/>
            <person name="Goltsman E."/>
            <person name="Clum A."/>
            <person name="Sun H."/>
            <person name="Schmutz J."/>
            <person name="Larimer F.W."/>
            <person name="Land M.L."/>
            <person name="Hauser L."/>
            <person name="Kyrpides N."/>
            <person name="Mikhailova N."/>
            <person name="Richardson P.P."/>
            <person name="Janssen P.H."/>
            <person name="de Vos W.M."/>
            <person name="Smidt H."/>
        </authorList>
    </citation>
    <scope>NUCLEOTIDE SEQUENCE [LARGE SCALE GENOMIC DNA]</scope>
    <source>
        <strain>DSM 11246 / JCM 15787 / PB90-1</strain>
    </source>
</reference>
<evidence type="ECO:0000255" key="1">
    <source>
        <dbReference type="HAMAP-Rule" id="MF_01954"/>
    </source>
</evidence>
<proteinExistence type="inferred from homology"/>